<dbReference type="EC" id="1.7.1.7" evidence="1"/>
<dbReference type="EMBL" id="BA000018">
    <property type="protein sequence ID" value="BAB42430.1"/>
    <property type="molecule type" value="Genomic_DNA"/>
</dbReference>
<dbReference type="PIR" id="B89909">
    <property type="entry name" value="B89909"/>
</dbReference>
<dbReference type="RefSeq" id="WP_000688122.1">
    <property type="nucleotide sequence ID" value="NC_002745.2"/>
</dbReference>
<dbReference type="SMR" id="P60563"/>
<dbReference type="EnsemblBacteria" id="BAB42430">
    <property type="protein sequence ID" value="BAB42430"/>
    <property type="gene ID" value="BAB42430"/>
</dbReference>
<dbReference type="KEGG" id="sau:SA1172"/>
<dbReference type="HOGENOM" id="CLU_022552_5_0_9"/>
<dbReference type="GO" id="GO:0005829">
    <property type="term" value="C:cytosol"/>
    <property type="evidence" value="ECO:0007669"/>
    <property type="project" value="TreeGrafter"/>
</dbReference>
<dbReference type="GO" id="GO:1902560">
    <property type="term" value="C:GMP reductase complex"/>
    <property type="evidence" value="ECO:0007669"/>
    <property type="project" value="InterPro"/>
</dbReference>
<dbReference type="GO" id="GO:0003920">
    <property type="term" value="F:GMP reductase activity"/>
    <property type="evidence" value="ECO:0007669"/>
    <property type="project" value="UniProtKB-UniRule"/>
</dbReference>
<dbReference type="GO" id="GO:0006163">
    <property type="term" value="P:purine nucleotide metabolic process"/>
    <property type="evidence" value="ECO:0007669"/>
    <property type="project" value="UniProtKB-UniRule"/>
</dbReference>
<dbReference type="CDD" id="cd00381">
    <property type="entry name" value="IMPDH"/>
    <property type="match status" value="1"/>
</dbReference>
<dbReference type="FunFam" id="3.20.20.70:FF:000079">
    <property type="entry name" value="GMP reductase"/>
    <property type="match status" value="1"/>
</dbReference>
<dbReference type="Gene3D" id="3.20.20.70">
    <property type="entry name" value="Aldolase class I"/>
    <property type="match status" value="1"/>
</dbReference>
<dbReference type="HAMAP" id="MF_01511">
    <property type="entry name" value="GMP_reduct_type2"/>
    <property type="match status" value="1"/>
</dbReference>
<dbReference type="InterPro" id="IPR013785">
    <property type="entry name" value="Aldolase_TIM"/>
</dbReference>
<dbReference type="InterPro" id="IPR050139">
    <property type="entry name" value="GMP_reductase"/>
</dbReference>
<dbReference type="InterPro" id="IPR005994">
    <property type="entry name" value="GuaC_type_2"/>
</dbReference>
<dbReference type="InterPro" id="IPR015875">
    <property type="entry name" value="IMP_DH/GMP_Rdtase_CS"/>
</dbReference>
<dbReference type="InterPro" id="IPR001093">
    <property type="entry name" value="IMP_DH_GMPRt"/>
</dbReference>
<dbReference type="NCBIfam" id="TIGR01306">
    <property type="entry name" value="GMP_reduct_2"/>
    <property type="match status" value="1"/>
</dbReference>
<dbReference type="NCBIfam" id="NF003966">
    <property type="entry name" value="PRK05458.1"/>
    <property type="match status" value="1"/>
</dbReference>
<dbReference type="PANTHER" id="PTHR43170">
    <property type="entry name" value="GMP REDUCTASE"/>
    <property type="match status" value="1"/>
</dbReference>
<dbReference type="PANTHER" id="PTHR43170:SF5">
    <property type="entry name" value="GMP REDUCTASE"/>
    <property type="match status" value="1"/>
</dbReference>
<dbReference type="Pfam" id="PF00478">
    <property type="entry name" value="IMPDH"/>
    <property type="match status" value="1"/>
</dbReference>
<dbReference type="PIRSF" id="PIRSF036500">
    <property type="entry name" value="GMP_red_Firmic"/>
    <property type="match status" value="1"/>
</dbReference>
<dbReference type="SMART" id="SM01240">
    <property type="entry name" value="IMPDH"/>
    <property type="match status" value="1"/>
</dbReference>
<dbReference type="SUPFAM" id="SSF51412">
    <property type="entry name" value="Inosine monophosphate dehydrogenase (IMPDH)"/>
    <property type="match status" value="1"/>
</dbReference>
<dbReference type="PROSITE" id="PS00487">
    <property type="entry name" value="IMP_DH_GMP_RED"/>
    <property type="match status" value="1"/>
</dbReference>
<accession>P60563</accession>
<accession>Q99UD9</accession>
<protein>
    <recommendedName>
        <fullName evidence="1">GMP reductase</fullName>
        <ecNumber evidence="1">1.7.1.7</ecNumber>
    </recommendedName>
    <alternativeName>
        <fullName evidence="1">Guanosine 5'-monophosphate oxidoreductase</fullName>
        <shortName evidence="1">Guanosine monophosphate reductase</shortName>
    </alternativeName>
</protein>
<proteinExistence type="evidence at protein level"/>
<feature type="chain" id="PRO_0000093768" description="GMP reductase">
    <location>
        <begin position="1"/>
        <end position="325"/>
    </location>
</feature>
<feature type="active site" description="Thioimidate intermediate" evidence="1">
    <location>
        <position position="174"/>
    </location>
</feature>
<feature type="binding site" evidence="1">
    <location>
        <begin position="203"/>
        <end position="226"/>
    </location>
    <ligand>
        <name>NADP(+)</name>
        <dbReference type="ChEBI" id="CHEBI:58349"/>
    </ligand>
</feature>
<comment type="function">
    <text evidence="1">Catalyzes the irreversible NADPH-dependent deamination of GMP to IMP. It functions in the conversion of nucleobase, nucleoside and nucleotide derivatives of G to A nucleotides, and in maintaining the intracellular balance of A and G nucleotides.</text>
</comment>
<comment type="catalytic activity">
    <reaction evidence="1">
        <text>IMP + NH4(+) + NADP(+) = GMP + NADPH + 2 H(+)</text>
        <dbReference type="Rhea" id="RHEA:17185"/>
        <dbReference type="ChEBI" id="CHEBI:15378"/>
        <dbReference type="ChEBI" id="CHEBI:28938"/>
        <dbReference type="ChEBI" id="CHEBI:57783"/>
        <dbReference type="ChEBI" id="CHEBI:58053"/>
        <dbReference type="ChEBI" id="CHEBI:58115"/>
        <dbReference type="ChEBI" id="CHEBI:58349"/>
        <dbReference type="EC" id="1.7.1.7"/>
    </reaction>
</comment>
<comment type="similarity">
    <text evidence="1">Belongs to the IMPDH/GMPR family. GuaC type 2 subfamily.</text>
</comment>
<name>GUAC_STAAN</name>
<organism>
    <name type="scientific">Staphylococcus aureus (strain N315)</name>
    <dbReference type="NCBI Taxonomy" id="158879"/>
    <lineage>
        <taxon>Bacteria</taxon>
        <taxon>Bacillati</taxon>
        <taxon>Bacillota</taxon>
        <taxon>Bacilli</taxon>
        <taxon>Bacillales</taxon>
        <taxon>Staphylococcaceae</taxon>
        <taxon>Staphylococcus</taxon>
    </lineage>
</organism>
<sequence>MKIFDYEDIQLIPNKCIVESRSECDTTIQFGPKKFKLPVVPANMQTVMNEKLAKWFAENDYFYIMHRFDEEARIPFIKHMQNSGLFASISVGVKKAEFDFIEKLAQEKLIPEYITIDIAHGHSDSVINMIKHIKNHIPDSFVIAGNVGTPEGVRELENAGADATKVGIGPGRVCITKIKTGFGTGGWQLAALNICSKAARKPLIADGGIRTHGDIAKSIRFGASMVMIGSLFAAHEESPGETVELDGKQYKEYFGSASEFQKGEHKNVEGKKMFVEHKGSLMDTLKEMQQDLQSSISYAGGKDLKSLRTVDYVIVRNSIFNGDRD</sequence>
<reference key="1">
    <citation type="journal article" date="2001" name="Lancet">
        <title>Whole genome sequencing of meticillin-resistant Staphylococcus aureus.</title>
        <authorList>
            <person name="Kuroda M."/>
            <person name="Ohta T."/>
            <person name="Uchiyama I."/>
            <person name="Baba T."/>
            <person name="Yuzawa H."/>
            <person name="Kobayashi I."/>
            <person name="Cui L."/>
            <person name="Oguchi A."/>
            <person name="Aoki K."/>
            <person name="Nagai Y."/>
            <person name="Lian J.-Q."/>
            <person name="Ito T."/>
            <person name="Kanamori M."/>
            <person name="Matsumaru H."/>
            <person name="Maruyama A."/>
            <person name="Murakami H."/>
            <person name="Hosoyama A."/>
            <person name="Mizutani-Ui Y."/>
            <person name="Takahashi N.K."/>
            <person name="Sawano T."/>
            <person name="Inoue R."/>
            <person name="Kaito C."/>
            <person name="Sekimizu K."/>
            <person name="Hirakawa H."/>
            <person name="Kuhara S."/>
            <person name="Goto S."/>
            <person name="Yabuzaki J."/>
            <person name="Kanehisa M."/>
            <person name="Yamashita A."/>
            <person name="Oshima K."/>
            <person name="Furuya K."/>
            <person name="Yoshino C."/>
            <person name="Shiba T."/>
            <person name="Hattori M."/>
            <person name="Ogasawara N."/>
            <person name="Hayashi H."/>
            <person name="Hiramatsu K."/>
        </authorList>
    </citation>
    <scope>NUCLEOTIDE SEQUENCE [LARGE SCALE GENOMIC DNA]</scope>
    <source>
        <strain>N315</strain>
    </source>
</reference>
<reference key="2">
    <citation type="submission" date="2007-10" db="UniProtKB">
        <title>Shotgun proteomic analysis of total and membrane protein extracts of S. aureus strain N315.</title>
        <authorList>
            <person name="Vaezzadeh A.R."/>
            <person name="Deshusses J."/>
            <person name="Lescuyer P."/>
            <person name="Hochstrasser D.F."/>
        </authorList>
    </citation>
    <scope>IDENTIFICATION BY MASS SPECTROMETRY [LARGE SCALE ANALYSIS]</scope>
    <source>
        <strain>N315</strain>
    </source>
</reference>
<evidence type="ECO:0000255" key="1">
    <source>
        <dbReference type="HAMAP-Rule" id="MF_01511"/>
    </source>
</evidence>
<gene>
    <name evidence="1" type="primary">guaC</name>
    <name type="ordered locus">SA1172</name>
</gene>
<keyword id="KW-0521">NADP</keyword>
<keyword id="KW-0560">Oxidoreductase</keyword>